<feature type="transit peptide" description="Mitochondrion" evidence="2">
    <location>
        <begin position="1"/>
        <end position="40"/>
    </location>
</feature>
<feature type="chain" id="PRO_0000042115" description="NAD(P)H oxidoreductase RTN4IP1, mitochondrial">
    <location>
        <begin position="41"/>
        <end position="396"/>
    </location>
</feature>
<feature type="domain" description="Enoyl reductase (ER)" evidence="2">
    <location>
        <begin position="52"/>
        <end position="393"/>
    </location>
</feature>
<feature type="binding site" evidence="1">
    <location>
        <position position="214"/>
    </location>
    <ligand>
        <name>NADPH</name>
        <dbReference type="ChEBI" id="CHEBI:57783"/>
    </ligand>
</feature>
<feature type="binding site" evidence="1">
    <location>
        <position position="216"/>
    </location>
    <ligand>
        <name>NADPH</name>
        <dbReference type="ChEBI" id="CHEBI:57783"/>
    </ligand>
</feature>
<feature type="binding site" evidence="1">
    <location>
        <position position="217"/>
    </location>
    <ligand>
        <name>NADPH</name>
        <dbReference type="ChEBI" id="CHEBI:57783"/>
    </ligand>
</feature>
<feature type="binding site" evidence="1">
    <location>
        <position position="237"/>
    </location>
    <ligand>
        <name>NADPH</name>
        <dbReference type="ChEBI" id="CHEBI:57783"/>
    </ligand>
</feature>
<feature type="binding site" evidence="1">
    <location>
        <position position="255"/>
    </location>
    <ligand>
        <name>NADPH</name>
        <dbReference type="ChEBI" id="CHEBI:57783"/>
    </ligand>
</feature>
<feature type="binding site" evidence="1">
    <location>
        <position position="276"/>
    </location>
    <ligand>
        <name>NADPH</name>
        <dbReference type="ChEBI" id="CHEBI:57783"/>
    </ligand>
</feature>
<feature type="binding site" evidence="1">
    <location>
        <position position="300"/>
    </location>
    <ligand>
        <name>NADPH</name>
        <dbReference type="ChEBI" id="CHEBI:57783"/>
    </ligand>
</feature>
<feature type="binding site" evidence="1">
    <location>
        <position position="341"/>
    </location>
    <ligand>
        <name>NADPH</name>
        <dbReference type="ChEBI" id="CHEBI:57783"/>
    </ligand>
</feature>
<feature type="binding site" evidence="1">
    <location>
        <position position="343"/>
    </location>
    <ligand>
        <name>NADPH</name>
        <dbReference type="ChEBI" id="CHEBI:57783"/>
    </ligand>
</feature>
<feature type="binding site" evidence="1">
    <location>
        <position position="386"/>
    </location>
    <ligand>
        <name>NADPH</name>
        <dbReference type="ChEBI" id="CHEBI:57783"/>
    </ligand>
</feature>
<feature type="binding site" evidence="1">
    <location>
        <position position="387"/>
    </location>
    <ligand>
        <name>NADPH</name>
        <dbReference type="ChEBI" id="CHEBI:57783"/>
    </ligand>
</feature>
<feature type="binding site" evidence="1">
    <location>
        <position position="388"/>
    </location>
    <ligand>
        <name>NADPH</name>
        <dbReference type="ChEBI" id="CHEBI:57783"/>
    </ligand>
</feature>
<feature type="sequence conflict" description="In Ref. 2; BAC34189/BAC39556/BAC40106 and 3; AAH24116." evidence="8" ref="2 3">
    <original>K</original>
    <variation>R</variation>
    <location>
        <position position="201"/>
    </location>
</feature>
<feature type="sequence conflict" description="In Ref. 1; AAK64604." evidence="8" ref="1">
    <original>K</original>
    <variation>E</variation>
    <location>
        <position position="206"/>
    </location>
</feature>
<accession>Q924D0</accession>
<accession>Q8R1T0</accession>
<keyword id="KW-0472">Membrane</keyword>
<keyword id="KW-0496">Mitochondrion</keyword>
<keyword id="KW-1000">Mitochondrion outer membrane</keyword>
<keyword id="KW-0521">NADP</keyword>
<keyword id="KW-0524">Neurogenesis</keyword>
<keyword id="KW-0547">Nucleotide-binding</keyword>
<keyword id="KW-0560">Oxidoreductase</keyword>
<keyword id="KW-1185">Reference proteome</keyword>
<keyword id="KW-0809">Transit peptide</keyword>
<keyword id="KW-0831">Ubiquinone biosynthesis</keyword>
<reference key="1">
    <citation type="journal article" date="2002" name="J. Neurochem.">
        <title>Identification and characterization of a novel Nogo-interacting mitochondrial protein (NIMP).</title>
        <authorList>
            <person name="Hu W.-H."/>
            <person name="Hausmann O.N."/>
            <person name="Yan M.-S."/>
            <person name="Walters W.M."/>
            <person name="Wong P.K.Y."/>
            <person name="Bethea J.R."/>
        </authorList>
    </citation>
    <scope>NUCLEOTIDE SEQUENCE [MRNA]</scope>
    <scope>FUNCTION</scope>
    <scope>INTERACTION WITH RTN4; UQCRC1 AND UQCRC2</scope>
    <scope>TISSUE SPECIFICITY</scope>
    <scope>SUBCELLULAR LOCATION</scope>
    <source>
        <tissue>Brain</tissue>
    </source>
</reference>
<reference key="2">
    <citation type="journal article" date="2005" name="Science">
        <title>The transcriptional landscape of the mammalian genome.</title>
        <authorList>
            <person name="Carninci P."/>
            <person name="Kasukawa T."/>
            <person name="Katayama S."/>
            <person name="Gough J."/>
            <person name="Frith M.C."/>
            <person name="Maeda N."/>
            <person name="Oyama R."/>
            <person name="Ravasi T."/>
            <person name="Lenhard B."/>
            <person name="Wells C."/>
            <person name="Kodzius R."/>
            <person name="Shimokawa K."/>
            <person name="Bajic V.B."/>
            <person name="Brenner S.E."/>
            <person name="Batalov S."/>
            <person name="Forrest A.R."/>
            <person name="Zavolan M."/>
            <person name="Davis M.J."/>
            <person name="Wilming L.G."/>
            <person name="Aidinis V."/>
            <person name="Allen J.E."/>
            <person name="Ambesi-Impiombato A."/>
            <person name="Apweiler R."/>
            <person name="Aturaliya R.N."/>
            <person name="Bailey T.L."/>
            <person name="Bansal M."/>
            <person name="Baxter L."/>
            <person name="Beisel K.W."/>
            <person name="Bersano T."/>
            <person name="Bono H."/>
            <person name="Chalk A.M."/>
            <person name="Chiu K.P."/>
            <person name="Choudhary V."/>
            <person name="Christoffels A."/>
            <person name="Clutterbuck D.R."/>
            <person name="Crowe M.L."/>
            <person name="Dalla E."/>
            <person name="Dalrymple B.P."/>
            <person name="de Bono B."/>
            <person name="Della Gatta G."/>
            <person name="di Bernardo D."/>
            <person name="Down T."/>
            <person name="Engstrom P."/>
            <person name="Fagiolini M."/>
            <person name="Faulkner G."/>
            <person name="Fletcher C.F."/>
            <person name="Fukushima T."/>
            <person name="Furuno M."/>
            <person name="Futaki S."/>
            <person name="Gariboldi M."/>
            <person name="Georgii-Hemming P."/>
            <person name="Gingeras T.R."/>
            <person name="Gojobori T."/>
            <person name="Green R.E."/>
            <person name="Gustincich S."/>
            <person name="Harbers M."/>
            <person name="Hayashi Y."/>
            <person name="Hensch T.K."/>
            <person name="Hirokawa N."/>
            <person name="Hill D."/>
            <person name="Huminiecki L."/>
            <person name="Iacono M."/>
            <person name="Ikeo K."/>
            <person name="Iwama A."/>
            <person name="Ishikawa T."/>
            <person name="Jakt M."/>
            <person name="Kanapin A."/>
            <person name="Katoh M."/>
            <person name="Kawasawa Y."/>
            <person name="Kelso J."/>
            <person name="Kitamura H."/>
            <person name="Kitano H."/>
            <person name="Kollias G."/>
            <person name="Krishnan S.P."/>
            <person name="Kruger A."/>
            <person name="Kummerfeld S.K."/>
            <person name="Kurochkin I.V."/>
            <person name="Lareau L.F."/>
            <person name="Lazarevic D."/>
            <person name="Lipovich L."/>
            <person name="Liu J."/>
            <person name="Liuni S."/>
            <person name="McWilliam S."/>
            <person name="Madan Babu M."/>
            <person name="Madera M."/>
            <person name="Marchionni L."/>
            <person name="Matsuda H."/>
            <person name="Matsuzawa S."/>
            <person name="Miki H."/>
            <person name="Mignone F."/>
            <person name="Miyake S."/>
            <person name="Morris K."/>
            <person name="Mottagui-Tabar S."/>
            <person name="Mulder N."/>
            <person name="Nakano N."/>
            <person name="Nakauchi H."/>
            <person name="Ng P."/>
            <person name="Nilsson R."/>
            <person name="Nishiguchi S."/>
            <person name="Nishikawa S."/>
            <person name="Nori F."/>
            <person name="Ohara O."/>
            <person name="Okazaki Y."/>
            <person name="Orlando V."/>
            <person name="Pang K.C."/>
            <person name="Pavan W.J."/>
            <person name="Pavesi G."/>
            <person name="Pesole G."/>
            <person name="Petrovsky N."/>
            <person name="Piazza S."/>
            <person name="Reed J."/>
            <person name="Reid J.F."/>
            <person name="Ring B.Z."/>
            <person name="Ringwald M."/>
            <person name="Rost B."/>
            <person name="Ruan Y."/>
            <person name="Salzberg S.L."/>
            <person name="Sandelin A."/>
            <person name="Schneider C."/>
            <person name="Schoenbach C."/>
            <person name="Sekiguchi K."/>
            <person name="Semple C.A."/>
            <person name="Seno S."/>
            <person name="Sessa L."/>
            <person name="Sheng Y."/>
            <person name="Shibata Y."/>
            <person name="Shimada H."/>
            <person name="Shimada K."/>
            <person name="Silva D."/>
            <person name="Sinclair B."/>
            <person name="Sperling S."/>
            <person name="Stupka E."/>
            <person name="Sugiura K."/>
            <person name="Sultana R."/>
            <person name="Takenaka Y."/>
            <person name="Taki K."/>
            <person name="Tammoja K."/>
            <person name="Tan S.L."/>
            <person name="Tang S."/>
            <person name="Taylor M.S."/>
            <person name="Tegner J."/>
            <person name="Teichmann S.A."/>
            <person name="Ueda H.R."/>
            <person name="van Nimwegen E."/>
            <person name="Verardo R."/>
            <person name="Wei C.L."/>
            <person name="Yagi K."/>
            <person name="Yamanishi H."/>
            <person name="Zabarovsky E."/>
            <person name="Zhu S."/>
            <person name="Zimmer A."/>
            <person name="Hide W."/>
            <person name="Bult C."/>
            <person name="Grimmond S.M."/>
            <person name="Teasdale R.D."/>
            <person name="Liu E.T."/>
            <person name="Brusic V."/>
            <person name="Quackenbush J."/>
            <person name="Wahlestedt C."/>
            <person name="Mattick J.S."/>
            <person name="Hume D.A."/>
            <person name="Kai C."/>
            <person name="Sasaki D."/>
            <person name="Tomaru Y."/>
            <person name="Fukuda S."/>
            <person name="Kanamori-Katayama M."/>
            <person name="Suzuki M."/>
            <person name="Aoki J."/>
            <person name="Arakawa T."/>
            <person name="Iida J."/>
            <person name="Imamura K."/>
            <person name="Itoh M."/>
            <person name="Kato T."/>
            <person name="Kawaji H."/>
            <person name="Kawagashira N."/>
            <person name="Kawashima T."/>
            <person name="Kojima M."/>
            <person name="Kondo S."/>
            <person name="Konno H."/>
            <person name="Nakano K."/>
            <person name="Ninomiya N."/>
            <person name="Nishio T."/>
            <person name="Okada M."/>
            <person name="Plessy C."/>
            <person name="Shibata K."/>
            <person name="Shiraki T."/>
            <person name="Suzuki S."/>
            <person name="Tagami M."/>
            <person name="Waki K."/>
            <person name="Watahiki A."/>
            <person name="Okamura-Oho Y."/>
            <person name="Suzuki H."/>
            <person name="Kawai J."/>
            <person name="Hayashizaki Y."/>
        </authorList>
    </citation>
    <scope>NUCLEOTIDE SEQUENCE [LARGE SCALE MRNA]</scope>
    <source>
        <strain>C57BL/6J</strain>
        <strain>NOD</strain>
        <tissue>Heart</tissue>
        <tissue>Liver</tissue>
        <tissue>Thymus</tissue>
    </source>
</reference>
<reference key="3">
    <citation type="journal article" date="2004" name="Genome Res.">
        <title>The status, quality, and expansion of the NIH full-length cDNA project: the Mammalian Gene Collection (MGC).</title>
        <authorList>
            <consortium name="The MGC Project Team"/>
        </authorList>
    </citation>
    <scope>NUCLEOTIDE SEQUENCE [LARGE SCALE MRNA]</scope>
    <source>
        <strain>FVB/N</strain>
        <tissue>Liver</tissue>
    </source>
</reference>
<reference key="4">
    <citation type="journal article" date="2010" name="Cell">
        <title>A tissue-specific atlas of mouse protein phosphorylation and expression.</title>
        <authorList>
            <person name="Huttlin E.L."/>
            <person name="Jedrychowski M.P."/>
            <person name="Elias J.E."/>
            <person name="Goswami T."/>
            <person name="Rad R."/>
            <person name="Beausoleil S.A."/>
            <person name="Villen J."/>
            <person name="Haas W."/>
            <person name="Sowa M.E."/>
            <person name="Gygi S.P."/>
        </authorList>
    </citation>
    <scope>IDENTIFICATION BY MASS SPECTROMETRY [LARGE SCALE ANALYSIS]</scope>
    <source>
        <tissue>Brain</tissue>
        <tissue>Brown adipose tissue</tissue>
        <tissue>Heart</tissue>
        <tissue>Kidney</tissue>
        <tissue>Liver</tissue>
        <tissue>Lung</tissue>
        <tissue>Pancreas</tissue>
        <tissue>Spleen</tissue>
    </source>
</reference>
<reference key="5">
    <citation type="journal article" date="2015" name="Am. J. Hum. Genet.">
        <title>Recessive mutations in RTN4IP1 cause isolated and syndromic optic neuropathies.</title>
        <authorList>
            <person name="Angebault C."/>
            <person name="Guichet P.O."/>
            <person name="Talmat-Amar Y."/>
            <person name="Charif M."/>
            <person name="Gerber S."/>
            <person name="Fares-Taie L."/>
            <person name="Gueguen N."/>
            <person name="Halloy F."/>
            <person name="Moore D."/>
            <person name="Amati-Bonneau P."/>
            <person name="Manes G."/>
            <person name="Hebrard M."/>
            <person name="Bocquet B."/>
            <person name="Quiles M."/>
            <person name="Piro-Megy C."/>
            <person name="Teigell M."/>
            <person name="Delettre C."/>
            <person name="Rossel M."/>
            <person name="Meunier I."/>
            <person name="Preising M."/>
            <person name="Lorenz B."/>
            <person name="Carelli V."/>
            <person name="Chinnery P.F."/>
            <person name="Yu-Wai-Man P."/>
            <person name="Kaplan J."/>
            <person name="Roubertie A."/>
            <person name="Barakat A."/>
            <person name="Bonneau D."/>
            <person name="Reynier P."/>
            <person name="Rozet J.M."/>
            <person name="Bomont P."/>
            <person name="Hamel C.P."/>
            <person name="Lenaers G."/>
        </authorList>
    </citation>
    <scope>FUNCTION</scope>
</reference>
<reference key="6">
    <citation type="journal article" date="2024" name="Nat. Chem. Biol.">
        <title>Mitochondrial matrix RTN4IP1/OPA10 is an oxidoreductase for coenzyme Q synthesis.</title>
        <authorList>
            <person name="Park I."/>
            <person name="Kim K.E."/>
            <person name="Kim J."/>
            <person name="Kim A.K."/>
            <person name="Bae S."/>
            <person name="Jung M."/>
            <person name="Choi J."/>
            <person name="Mishra P.K."/>
            <person name="Kim T.M."/>
            <person name="Kwak C."/>
            <person name="Kang M.G."/>
            <person name="Yoo C.M."/>
            <person name="Mun J.Y."/>
            <person name="Liu K.H."/>
            <person name="Lee K.S."/>
            <person name="Kim J.S."/>
            <person name="Suh J.M."/>
            <person name="Rhee H.W."/>
        </authorList>
    </citation>
    <scope>FUNCTION</scope>
    <scope>PATHWAY</scope>
    <scope>SUBCELLULAR LOCATION</scope>
</reference>
<dbReference type="EC" id="1.6.5.-" evidence="1"/>
<dbReference type="EMBL" id="AF336862">
    <property type="protein sequence ID" value="AAK64604.1"/>
    <property type="molecule type" value="mRNA"/>
</dbReference>
<dbReference type="EMBL" id="AK050324">
    <property type="protein sequence ID" value="BAC34189.1"/>
    <property type="molecule type" value="mRNA"/>
</dbReference>
<dbReference type="EMBL" id="AK085858">
    <property type="protein sequence ID" value="BAC39556.1"/>
    <property type="molecule type" value="mRNA"/>
</dbReference>
<dbReference type="EMBL" id="AK088029">
    <property type="protein sequence ID" value="BAC40106.1"/>
    <property type="molecule type" value="mRNA"/>
</dbReference>
<dbReference type="EMBL" id="BC024116">
    <property type="protein sequence ID" value="AAH24116.1"/>
    <property type="molecule type" value="mRNA"/>
</dbReference>
<dbReference type="CCDS" id="CCDS23823.1"/>
<dbReference type="RefSeq" id="NP_570962.2">
    <property type="nucleotide sequence ID" value="NM_130892.4"/>
</dbReference>
<dbReference type="SMR" id="Q924D0"/>
<dbReference type="BioGRID" id="228396">
    <property type="interactions" value="13"/>
</dbReference>
<dbReference type="FunCoup" id="Q924D0">
    <property type="interactions" value="1275"/>
</dbReference>
<dbReference type="STRING" id="10090.ENSMUSP00000060940"/>
<dbReference type="GlyGen" id="Q924D0">
    <property type="glycosylation" value="2 sites, 1 O-linked glycan (2 sites)"/>
</dbReference>
<dbReference type="iPTMnet" id="Q924D0"/>
<dbReference type="PhosphoSitePlus" id="Q924D0"/>
<dbReference type="SwissPalm" id="Q924D0"/>
<dbReference type="jPOST" id="Q924D0"/>
<dbReference type="PaxDb" id="10090-ENSMUSP00000060940"/>
<dbReference type="PeptideAtlas" id="Q924D0"/>
<dbReference type="ProteomicsDB" id="260864"/>
<dbReference type="Pumba" id="Q924D0"/>
<dbReference type="DNASU" id="170728"/>
<dbReference type="GeneID" id="170728"/>
<dbReference type="KEGG" id="mmu:170728"/>
<dbReference type="UCSC" id="uc007ezp.1">
    <property type="organism name" value="mouse"/>
</dbReference>
<dbReference type="AGR" id="MGI:2178759"/>
<dbReference type="CTD" id="84816"/>
<dbReference type="MGI" id="MGI:2178759">
    <property type="gene designation" value="Rtn4ip1"/>
</dbReference>
<dbReference type="eggNOG" id="KOG1198">
    <property type="taxonomic scope" value="Eukaryota"/>
</dbReference>
<dbReference type="InParanoid" id="Q924D0"/>
<dbReference type="OrthoDB" id="48317at2759"/>
<dbReference type="PhylomeDB" id="Q924D0"/>
<dbReference type="TreeFam" id="TF313919"/>
<dbReference type="UniPathway" id="UPA00232"/>
<dbReference type="BioGRID-ORCS" id="170728">
    <property type="hits" value="17 hits in 78 CRISPR screens"/>
</dbReference>
<dbReference type="PRO" id="PR:Q924D0"/>
<dbReference type="Proteomes" id="UP000000589">
    <property type="component" value="Unplaced"/>
</dbReference>
<dbReference type="RNAct" id="Q924D0">
    <property type="molecule type" value="protein"/>
</dbReference>
<dbReference type="GO" id="GO:0005759">
    <property type="term" value="C:mitochondrial matrix"/>
    <property type="evidence" value="ECO:0000314"/>
    <property type="project" value="FlyBase"/>
</dbReference>
<dbReference type="GO" id="GO:0005741">
    <property type="term" value="C:mitochondrial outer membrane"/>
    <property type="evidence" value="ECO:0000250"/>
    <property type="project" value="UniProtKB"/>
</dbReference>
<dbReference type="GO" id="GO:0005739">
    <property type="term" value="C:mitochondrion"/>
    <property type="evidence" value="ECO:0007005"/>
    <property type="project" value="MGI"/>
</dbReference>
<dbReference type="GO" id="GO:0016491">
    <property type="term" value="F:oxidoreductase activity"/>
    <property type="evidence" value="ECO:0007669"/>
    <property type="project" value="InterPro"/>
</dbReference>
<dbReference type="GO" id="GO:0008270">
    <property type="term" value="F:zinc ion binding"/>
    <property type="evidence" value="ECO:0007669"/>
    <property type="project" value="InterPro"/>
</dbReference>
<dbReference type="GO" id="GO:0007399">
    <property type="term" value="P:nervous system development"/>
    <property type="evidence" value="ECO:0007669"/>
    <property type="project" value="UniProtKB-KW"/>
</dbReference>
<dbReference type="GO" id="GO:0050773">
    <property type="term" value="P:regulation of dendrite development"/>
    <property type="evidence" value="ECO:0000315"/>
    <property type="project" value="UniProtKB"/>
</dbReference>
<dbReference type="CDD" id="cd08248">
    <property type="entry name" value="RTN4I1"/>
    <property type="match status" value="1"/>
</dbReference>
<dbReference type="FunFam" id="3.40.50.720:FF:000147">
    <property type="entry name" value="Reticulon-4-interacting protein 1 homolog, mitochondrial"/>
    <property type="match status" value="1"/>
</dbReference>
<dbReference type="FunFam" id="3.90.180.10:FF:000009">
    <property type="entry name" value="Reticulon-4-interacting protein 1, mitochondrial"/>
    <property type="match status" value="1"/>
</dbReference>
<dbReference type="Gene3D" id="3.90.180.10">
    <property type="entry name" value="Medium-chain alcohol dehydrogenases, catalytic domain"/>
    <property type="match status" value="1"/>
</dbReference>
<dbReference type="Gene3D" id="3.40.50.720">
    <property type="entry name" value="NAD(P)-binding Rossmann-like Domain"/>
    <property type="match status" value="1"/>
</dbReference>
<dbReference type="InterPro" id="IPR013154">
    <property type="entry name" value="ADH-like_N"/>
</dbReference>
<dbReference type="InterPro" id="IPR011032">
    <property type="entry name" value="GroES-like_sf"/>
</dbReference>
<dbReference type="InterPro" id="IPR036291">
    <property type="entry name" value="NAD(P)-bd_dom_sf"/>
</dbReference>
<dbReference type="InterPro" id="IPR020843">
    <property type="entry name" value="PKS_ER"/>
</dbReference>
<dbReference type="InterPro" id="IPR002364">
    <property type="entry name" value="Quin_OxRdtase/zeta-crystal_CS"/>
</dbReference>
<dbReference type="InterPro" id="IPR037397">
    <property type="entry name" value="RTN4I1"/>
</dbReference>
<dbReference type="InterPro" id="IPR050700">
    <property type="entry name" value="YIM1/Zinc_Alcohol_DH_Fams"/>
</dbReference>
<dbReference type="PANTHER" id="PTHR11695">
    <property type="entry name" value="ALCOHOL DEHYDROGENASE RELATED"/>
    <property type="match status" value="1"/>
</dbReference>
<dbReference type="PANTHER" id="PTHR11695:SF294">
    <property type="entry name" value="RETICULON-4-INTERACTING PROTEIN 1, MITOCHONDRIAL"/>
    <property type="match status" value="1"/>
</dbReference>
<dbReference type="Pfam" id="PF08240">
    <property type="entry name" value="ADH_N"/>
    <property type="match status" value="1"/>
</dbReference>
<dbReference type="Pfam" id="PF13602">
    <property type="entry name" value="ADH_zinc_N_2"/>
    <property type="match status" value="1"/>
</dbReference>
<dbReference type="SMART" id="SM00829">
    <property type="entry name" value="PKS_ER"/>
    <property type="match status" value="1"/>
</dbReference>
<dbReference type="SUPFAM" id="SSF50129">
    <property type="entry name" value="GroES-like"/>
    <property type="match status" value="1"/>
</dbReference>
<dbReference type="SUPFAM" id="SSF51735">
    <property type="entry name" value="NAD(P)-binding Rossmann-fold domains"/>
    <property type="match status" value="1"/>
</dbReference>
<dbReference type="PROSITE" id="PS01162">
    <property type="entry name" value="QOR_ZETA_CRYSTAL"/>
    <property type="match status" value="1"/>
</dbReference>
<comment type="function">
    <text evidence="1 3 4 5">NAD(P)H oxidoreductase involved in the ubiquinone biosynthetic pathway (PubMed:37884807). Required for the O-methyltransferase activity of COQ3 (By similarity). Able to catalyze the oxidoreduction of 3-demethylubiquinone into 3-demethylubiquinol in vitro (By similarity). However, it is unclear if 3-demethylubiquinone constitutes a substrate in vivo (By similarity). May also play a role in the regulation of retinal ganglion cell (RGC) neurite outgrowth, and hence in the development of the inner retina and optic nerve (PubMed:26593267). Appears to be a potent inhibitor of regeneration following spinal cord injury (PubMed:12067236).</text>
</comment>
<comment type="catalytic activity">
    <reaction evidence="1">
        <text>a 3-demethylubiquinone + NADH + 2 H(+) = a 3-demethylubiquinol + NAD(+)</text>
        <dbReference type="Rhea" id="RHEA:83235"/>
        <dbReference type="Rhea" id="RHEA-COMP:10914"/>
        <dbReference type="Rhea" id="RHEA-COMP:19654"/>
        <dbReference type="ChEBI" id="CHEBI:15378"/>
        <dbReference type="ChEBI" id="CHEBI:57540"/>
        <dbReference type="ChEBI" id="CHEBI:57945"/>
        <dbReference type="ChEBI" id="CHEBI:84422"/>
        <dbReference type="ChEBI" id="CHEBI:231825"/>
    </reaction>
</comment>
<comment type="catalytic activity">
    <reaction evidence="1">
        <text>a 3-demethylubiquinone + NADPH + 2 H(+) = a 3-demethylubiquinol + NADP(+)</text>
        <dbReference type="Rhea" id="RHEA:83239"/>
        <dbReference type="Rhea" id="RHEA-COMP:10914"/>
        <dbReference type="Rhea" id="RHEA-COMP:19654"/>
        <dbReference type="ChEBI" id="CHEBI:15378"/>
        <dbReference type="ChEBI" id="CHEBI:57783"/>
        <dbReference type="ChEBI" id="CHEBI:58349"/>
        <dbReference type="ChEBI" id="CHEBI:84422"/>
        <dbReference type="ChEBI" id="CHEBI:231825"/>
    </reaction>
</comment>
<comment type="catalytic activity">
    <reaction evidence="1">
        <text>3-demethylubiquinone-10 + NADH + 2 H(+) = 3-demethylubiquinol-10 + NAD(+)</text>
        <dbReference type="Rhea" id="RHEA:83243"/>
        <dbReference type="ChEBI" id="CHEBI:15378"/>
        <dbReference type="ChEBI" id="CHEBI:57540"/>
        <dbReference type="ChEBI" id="CHEBI:57945"/>
        <dbReference type="ChEBI" id="CHEBI:64182"/>
        <dbReference type="ChEBI" id="CHEBI:231824"/>
    </reaction>
</comment>
<comment type="catalytic activity">
    <reaction evidence="1">
        <text>3-demethylubiquinone-10 + NADPH + 2 H(+) = 3-demethylubiquinol-10 + NADP(+)</text>
        <dbReference type="Rhea" id="RHEA:83247"/>
        <dbReference type="ChEBI" id="CHEBI:15378"/>
        <dbReference type="ChEBI" id="CHEBI:57783"/>
        <dbReference type="ChEBI" id="CHEBI:58349"/>
        <dbReference type="ChEBI" id="CHEBI:64182"/>
        <dbReference type="ChEBI" id="CHEBI:231824"/>
    </reaction>
</comment>
<comment type="pathway">
    <text evidence="5">Cofactor biosynthesis; ubiquinone biosynthesis.</text>
</comment>
<comment type="subunit">
    <text evidence="3">Interacts with RTN4, UQCRC1 and UQCRC2.</text>
</comment>
<comment type="subcellular location">
    <subcellularLocation>
        <location evidence="9">Mitochondrion matrix</location>
    </subcellularLocation>
    <subcellularLocation>
        <location evidence="1">Mitochondrion outer membrane</location>
    </subcellularLocation>
    <text evidence="1">Mainly localizes to the mitochondrial matrix. Also colocalizes with the endoplasmic reticulum HSPA5 at spots corresponding to contacts with mitochondria.</text>
</comment>
<comment type="tissue specificity">
    <text evidence="3">Widely expressed in mitochondria-enriched tissues. Found in heart, kidney, liver, brain and spinal cord.</text>
</comment>
<comment type="similarity">
    <text evidence="8">Belongs to the zinc-containing alcohol dehydrogenase family. Quinone oxidoreductase subfamily.</text>
</comment>
<name>RT4I1_MOUSE</name>
<gene>
    <name evidence="7 10" type="primary">Rtn4ip1</name>
    <name evidence="6" type="synonym">Nimp</name>
</gene>
<sequence length="396" mass="43371">MGVLKTCVLRRSACAAACFWRRTVIPKPPFRGISTTSARSTVMPAWVIDKYGKNEVLRFTQNMMLPIIHYPNEVIIKVHAASVNPIDVNMRSGYGATALNMKRDPLHMKTKGEEFPLTLGRDVSGVVMECGLDVKYFQPGDEVWAAVPPWKQGTLSEFVVVSGNEVSHKPKSLTHTQAASLPYVALTAWSAINKVGGLSDKNCKGKRALILGASGGVGTFAIQVMKAWGAHVTAVCSKDASELVRKLGADEVIDYTLGSVEEQLKSLKLFDFILDNVGGSTETWALNFLKKWSGATYVTLVTPFLLNMDRLGVADGMLQTGVTVGTKALKHLWQGVHYRWAFFMASGPYLDEIAELVDAGKIRPVIERTFPFSEVPEAFLKVERGHARGKTVVNVV</sequence>
<protein>
    <recommendedName>
        <fullName evidence="8">NAD(P)H oxidoreductase RTN4IP1, mitochondrial</fullName>
        <ecNumber evidence="1">1.6.5.-</ecNumber>
    </recommendedName>
    <alternativeName>
        <fullName evidence="6">NOGO-interacting mitochondrial protein</fullName>
    </alternativeName>
    <alternativeName>
        <fullName evidence="8">Reticulon-4-interacting protein 1</fullName>
    </alternativeName>
</protein>
<organism>
    <name type="scientific">Mus musculus</name>
    <name type="common">Mouse</name>
    <dbReference type="NCBI Taxonomy" id="10090"/>
    <lineage>
        <taxon>Eukaryota</taxon>
        <taxon>Metazoa</taxon>
        <taxon>Chordata</taxon>
        <taxon>Craniata</taxon>
        <taxon>Vertebrata</taxon>
        <taxon>Euteleostomi</taxon>
        <taxon>Mammalia</taxon>
        <taxon>Eutheria</taxon>
        <taxon>Euarchontoglires</taxon>
        <taxon>Glires</taxon>
        <taxon>Rodentia</taxon>
        <taxon>Myomorpha</taxon>
        <taxon>Muroidea</taxon>
        <taxon>Muridae</taxon>
        <taxon>Murinae</taxon>
        <taxon>Mus</taxon>
        <taxon>Mus</taxon>
    </lineage>
</organism>
<evidence type="ECO:0000250" key="1">
    <source>
        <dbReference type="UniProtKB" id="Q8WWV3"/>
    </source>
</evidence>
<evidence type="ECO:0000255" key="2"/>
<evidence type="ECO:0000269" key="3">
    <source>
    </source>
</evidence>
<evidence type="ECO:0000269" key="4">
    <source>
    </source>
</evidence>
<evidence type="ECO:0000269" key="5">
    <source>
    </source>
</evidence>
<evidence type="ECO:0000303" key="6">
    <source>
    </source>
</evidence>
<evidence type="ECO:0000303" key="7">
    <source>
    </source>
</evidence>
<evidence type="ECO:0000305" key="8"/>
<evidence type="ECO:0000305" key="9">
    <source>
    </source>
</evidence>
<evidence type="ECO:0000312" key="10">
    <source>
        <dbReference type="MGI" id="MGI:2178759"/>
    </source>
</evidence>
<proteinExistence type="evidence at protein level"/>